<reference key="1">
    <citation type="journal article" date="2008" name="PLoS ONE">
        <title>Genome sequence of a lancefield group C Streptococcus zooepidemicus strain causing epidemic nephritis: new information about an old disease.</title>
        <authorList>
            <person name="Beres S.B."/>
            <person name="Sesso R."/>
            <person name="Pinto S.W.L."/>
            <person name="Hoe N.P."/>
            <person name="Porcella S.F."/>
            <person name="Deleo F.R."/>
            <person name="Musser J.M."/>
        </authorList>
    </citation>
    <scope>NUCLEOTIDE SEQUENCE [LARGE SCALE GENOMIC DNA]</scope>
    <source>
        <strain>MGCS10565</strain>
    </source>
</reference>
<name>RSMG_STREM</name>
<accession>B4U4T4</accession>
<sequence>MTPQAFYLALEQAGFALTNHQKEQFDTYFKLLVDWNRKINLTAITEENEVYLKHFYDSVAPLLQGYIPNEPLRLLDIGAGAGFPSIPMKIMFPKLDVTIIDSLNKRIHFLQLLAKELGLEGVHFYHGRAEDFGQDKQFRGQFDLVTARAVARMQILSELTIPFLKIKGKLIALKAQAADQELEEAKKALQLLFAKVLDHQPYQLPNGDGRYITLVEKKKETPNKYPRKAGIPNKKPL</sequence>
<keyword id="KW-0963">Cytoplasm</keyword>
<keyword id="KW-0489">Methyltransferase</keyword>
<keyword id="KW-0698">rRNA processing</keyword>
<keyword id="KW-0949">S-adenosyl-L-methionine</keyword>
<keyword id="KW-0808">Transferase</keyword>
<proteinExistence type="inferred from homology"/>
<comment type="function">
    <text evidence="1">Specifically methylates the N7 position of a guanine in 16S rRNA.</text>
</comment>
<comment type="subcellular location">
    <subcellularLocation>
        <location evidence="1">Cytoplasm</location>
    </subcellularLocation>
</comment>
<comment type="similarity">
    <text evidence="1">Belongs to the methyltransferase superfamily. RNA methyltransferase RsmG family.</text>
</comment>
<dbReference type="EC" id="2.1.1.-" evidence="1"/>
<dbReference type="EMBL" id="CP001129">
    <property type="protein sequence ID" value="ACG63001.1"/>
    <property type="molecule type" value="Genomic_DNA"/>
</dbReference>
<dbReference type="RefSeq" id="WP_012516257.1">
    <property type="nucleotide sequence ID" value="NC_011134.1"/>
</dbReference>
<dbReference type="SMR" id="B4U4T4"/>
<dbReference type="KEGG" id="sez:Sez_1670"/>
<dbReference type="HOGENOM" id="CLU_065341_0_2_9"/>
<dbReference type="Proteomes" id="UP000001873">
    <property type="component" value="Chromosome"/>
</dbReference>
<dbReference type="GO" id="GO:0005829">
    <property type="term" value="C:cytosol"/>
    <property type="evidence" value="ECO:0007669"/>
    <property type="project" value="TreeGrafter"/>
</dbReference>
<dbReference type="GO" id="GO:0070043">
    <property type="term" value="F:rRNA (guanine-N7-)-methyltransferase activity"/>
    <property type="evidence" value="ECO:0007669"/>
    <property type="project" value="UniProtKB-UniRule"/>
</dbReference>
<dbReference type="CDD" id="cd02440">
    <property type="entry name" value="AdoMet_MTases"/>
    <property type="match status" value="1"/>
</dbReference>
<dbReference type="FunFam" id="3.40.50.150:FF:000041">
    <property type="entry name" value="Ribosomal RNA small subunit methyltransferase G"/>
    <property type="match status" value="1"/>
</dbReference>
<dbReference type="Gene3D" id="3.40.50.150">
    <property type="entry name" value="Vaccinia Virus protein VP39"/>
    <property type="match status" value="1"/>
</dbReference>
<dbReference type="HAMAP" id="MF_00074">
    <property type="entry name" value="16SrRNA_methyltr_G"/>
    <property type="match status" value="1"/>
</dbReference>
<dbReference type="InterPro" id="IPR003682">
    <property type="entry name" value="rRNA_ssu_MeTfrase_G"/>
</dbReference>
<dbReference type="InterPro" id="IPR029063">
    <property type="entry name" value="SAM-dependent_MTases_sf"/>
</dbReference>
<dbReference type="NCBIfam" id="TIGR00138">
    <property type="entry name" value="rsmG_gidB"/>
    <property type="match status" value="1"/>
</dbReference>
<dbReference type="PANTHER" id="PTHR31760">
    <property type="entry name" value="S-ADENOSYL-L-METHIONINE-DEPENDENT METHYLTRANSFERASES SUPERFAMILY PROTEIN"/>
    <property type="match status" value="1"/>
</dbReference>
<dbReference type="PANTHER" id="PTHR31760:SF0">
    <property type="entry name" value="S-ADENOSYL-L-METHIONINE-DEPENDENT METHYLTRANSFERASES SUPERFAMILY PROTEIN"/>
    <property type="match status" value="1"/>
</dbReference>
<dbReference type="Pfam" id="PF02527">
    <property type="entry name" value="GidB"/>
    <property type="match status" value="1"/>
</dbReference>
<dbReference type="PIRSF" id="PIRSF003078">
    <property type="entry name" value="GidB"/>
    <property type="match status" value="1"/>
</dbReference>
<dbReference type="SUPFAM" id="SSF53335">
    <property type="entry name" value="S-adenosyl-L-methionine-dependent methyltransferases"/>
    <property type="match status" value="1"/>
</dbReference>
<feature type="chain" id="PRO_1000092654" description="Ribosomal RNA small subunit methyltransferase G">
    <location>
        <begin position="1"/>
        <end position="237"/>
    </location>
</feature>
<feature type="binding site" evidence="1">
    <location>
        <position position="78"/>
    </location>
    <ligand>
        <name>S-adenosyl-L-methionine</name>
        <dbReference type="ChEBI" id="CHEBI:59789"/>
    </ligand>
</feature>
<feature type="binding site" evidence="1">
    <location>
        <position position="83"/>
    </location>
    <ligand>
        <name>S-adenosyl-L-methionine</name>
        <dbReference type="ChEBI" id="CHEBI:59789"/>
    </ligand>
</feature>
<feature type="binding site" evidence="1">
    <location>
        <begin position="129"/>
        <end position="130"/>
    </location>
    <ligand>
        <name>S-adenosyl-L-methionine</name>
        <dbReference type="ChEBI" id="CHEBI:59789"/>
    </ligand>
</feature>
<feature type="binding site" evidence="1">
    <location>
        <position position="148"/>
    </location>
    <ligand>
        <name>S-adenosyl-L-methionine</name>
        <dbReference type="ChEBI" id="CHEBI:59789"/>
    </ligand>
</feature>
<evidence type="ECO:0000255" key="1">
    <source>
        <dbReference type="HAMAP-Rule" id="MF_00074"/>
    </source>
</evidence>
<gene>
    <name evidence="1" type="primary">rsmG</name>
    <name type="ordered locus">Sez_1670</name>
</gene>
<protein>
    <recommendedName>
        <fullName evidence="1">Ribosomal RNA small subunit methyltransferase G</fullName>
        <ecNumber evidence="1">2.1.1.-</ecNumber>
    </recommendedName>
    <alternativeName>
        <fullName evidence="1">16S rRNA 7-methylguanosine methyltransferase</fullName>
        <shortName evidence="1">16S rRNA m7G methyltransferase</shortName>
    </alternativeName>
</protein>
<organism>
    <name type="scientific">Streptococcus equi subsp. zooepidemicus (strain MGCS10565)</name>
    <dbReference type="NCBI Taxonomy" id="552526"/>
    <lineage>
        <taxon>Bacteria</taxon>
        <taxon>Bacillati</taxon>
        <taxon>Bacillota</taxon>
        <taxon>Bacilli</taxon>
        <taxon>Lactobacillales</taxon>
        <taxon>Streptococcaceae</taxon>
        <taxon>Streptococcus</taxon>
    </lineage>
</organism>